<comment type="function">
    <text evidence="1">Catalyzes the reversible conversion of ribose-5-phosphate to ribulose 5-phosphate.</text>
</comment>
<comment type="catalytic activity">
    <reaction evidence="1">
        <text>aldehydo-D-ribose 5-phosphate = D-ribulose 5-phosphate</text>
        <dbReference type="Rhea" id="RHEA:14657"/>
        <dbReference type="ChEBI" id="CHEBI:58121"/>
        <dbReference type="ChEBI" id="CHEBI:58273"/>
        <dbReference type="EC" id="5.3.1.6"/>
    </reaction>
</comment>
<comment type="pathway">
    <text evidence="1">Carbohydrate degradation; pentose phosphate pathway; D-ribose 5-phosphate from D-ribulose 5-phosphate (non-oxidative stage): step 1/1.</text>
</comment>
<comment type="subunit">
    <text evidence="1">Homodimer.</text>
</comment>
<comment type="similarity">
    <text evidence="1">Belongs to the ribose 5-phosphate isomerase family.</text>
</comment>
<evidence type="ECO:0000255" key="1">
    <source>
        <dbReference type="HAMAP-Rule" id="MF_00170"/>
    </source>
</evidence>
<feature type="chain" id="PRO_1000016904" description="Ribose-5-phosphate isomerase A">
    <location>
        <begin position="1"/>
        <end position="224"/>
    </location>
</feature>
<feature type="active site" description="Proton acceptor" evidence="1">
    <location>
        <position position="108"/>
    </location>
</feature>
<feature type="binding site" evidence="1">
    <location>
        <begin position="33"/>
        <end position="36"/>
    </location>
    <ligand>
        <name>substrate</name>
    </ligand>
</feature>
<feature type="binding site" evidence="1">
    <location>
        <begin position="86"/>
        <end position="89"/>
    </location>
    <ligand>
        <name>substrate</name>
    </ligand>
</feature>
<feature type="binding site" evidence="1">
    <location>
        <begin position="99"/>
        <end position="102"/>
    </location>
    <ligand>
        <name>substrate</name>
    </ligand>
</feature>
<feature type="binding site" evidence="1">
    <location>
        <position position="126"/>
    </location>
    <ligand>
        <name>substrate</name>
    </ligand>
</feature>
<gene>
    <name evidence="1" type="primary">rpiA</name>
    <name type="ordered locus">BAV2246</name>
</gene>
<dbReference type="EC" id="5.3.1.6" evidence="1"/>
<dbReference type="EMBL" id="AM167904">
    <property type="protein sequence ID" value="CAJ49856.1"/>
    <property type="molecule type" value="Genomic_DNA"/>
</dbReference>
<dbReference type="RefSeq" id="WP_012417907.1">
    <property type="nucleotide sequence ID" value="NC_010645.1"/>
</dbReference>
<dbReference type="SMR" id="Q2KYQ1"/>
<dbReference type="STRING" id="360910.BAV2246"/>
<dbReference type="GeneID" id="92934641"/>
<dbReference type="KEGG" id="bav:BAV2246"/>
<dbReference type="eggNOG" id="COG0120">
    <property type="taxonomic scope" value="Bacteria"/>
</dbReference>
<dbReference type="HOGENOM" id="CLU_056590_1_1_4"/>
<dbReference type="OrthoDB" id="5870696at2"/>
<dbReference type="UniPathway" id="UPA00115">
    <property type="reaction ID" value="UER00412"/>
</dbReference>
<dbReference type="Proteomes" id="UP000001977">
    <property type="component" value="Chromosome"/>
</dbReference>
<dbReference type="GO" id="GO:0005829">
    <property type="term" value="C:cytosol"/>
    <property type="evidence" value="ECO:0007669"/>
    <property type="project" value="TreeGrafter"/>
</dbReference>
<dbReference type="GO" id="GO:0004751">
    <property type="term" value="F:ribose-5-phosphate isomerase activity"/>
    <property type="evidence" value="ECO:0007669"/>
    <property type="project" value="UniProtKB-UniRule"/>
</dbReference>
<dbReference type="GO" id="GO:0006014">
    <property type="term" value="P:D-ribose metabolic process"/>
    <property type="evidence" value="ECO:0007669"/>
    <property type="project" value="TreeGrafter"/>
</dbReference>
<dbReference type="GO" id="GO:0009052">
    <property type="term" value="P:pentose-phosphate shunt, non-oxidative branch"/>
    <property type="evidence" value="ECO:0007669"/>
    <property type="project" value="UniProtKB-UniRule"/>
</dbReference>
<dbReference type="CDD" id="cd01398">
    <property type="entry name" value="RPI_A"/>
    <property type="match status" value="1"/>
</dbReference>
<dbReference type="FunFam" id="3.40.50.1360:FF:000001">
    <property type="entry name" value="Ribose-5-phosphate isomerase A"/>
    <property type="match status" value="1"/>
</dbReference>
<dbReference type="Gene3D" id="3.30.70.260">
    <property type="match status" value="1"/>
</dbReference>
<dbReference type="Gene3D" id="3.40.50.1360">
    <property type="match status" value="1"/>
</dbReference>
<dbReference type="HAMAP" id="MF_00170">
    <property type="entry name" value="Rib_5P_isom_A"/>
    <property type="match status" value="1"/>
</dbReference>
<dbReference type="InterPro" id="IPR037171">
    <property type="entry name" value="NagB/RpiA_transferase-like"/>
</dbReference>
<dbReference type="InterPro" id="IPR020672">
    <property type="entry name" value="Ribose5P_isomerase_typA_subgr"/>
</dbReference>
<dbReference type="InterPro" id="IPR004788">
    <property type="entry name" value="Ribose5P_isomerase_type_A"/>
</dbReference>
<dbReference type="NCBIfam" id="NF001924">
    <property type="entry name" value="PRK00702.1"/>
    <property type="match status" value="1"/>
</dbReference>
<dbReference type="NCBIfam" id="TIGR00021">
    <property type="entry name" value="rpiA"/>
    <property type="match status" value="1"/>
</dbReference>
<dbReference type="PANTHER" id="PTHR11934">
    <property type="entry name" value="RIBOSE-5-PHOSPHATE ISOMERASE"/>
    <property type="match status" value="1"/>
</dbReference>
<dbReference type="PANTHER" id="PTHR11934:SF0">
    <property type="entry name" value="RIBOSE-5-PHOSPHATE ISOMERASE"/>
    <property type="match status" value="1"/>
</dbReference>
<dbReference type="Pfam" id="PF06026">
    <property type="entry name" value="Rib_5-P_isom_A"/>
    <property type="match status" value="1"/>
</dbReference>
<dbReference type="SUPFAM" id="SSF75445">
    <property type="entry name" value="D-ribose-5-phosphate isomerase (RpiA), lid domain"/>
    <property type="match status" value="1"/>
</dbReference>
<dbReference type="SUPFAM" id="SSF100950">
    <property type="entry name" value="NagB/RpiA/CoA transferase-like"/>
    <property type="match status" value="1"/>
</dbReference>
<sequence length="224" mass="23550">MLTQQQLKQQAADAALEFVEQVAGPDVIIGVGTGSTADLFIDGLARFAGRIRGTVASSERSAQRLASHGLLVLDLNDVQYMPIYVDGADEIDANLHMIKGGGGALTREKIVASVAERFICIADESKLVDRLGAFPLPLEVIPMARAAVARSLAALGGEPRLREGFVTDNGNIILDVHGLSINDAPALEARVNNIPGVVTCGLFSLAGADVALLATQNGIRRLSR</sequence>
<keyword id="KW-0413">Isomerase</keyword>
<keyword id="KW-1185">Reference proteome</keyword>
<organism>
    <name type="scientific">Bordetella avium (strain 197N)</name>
    <dbReference type="NCBI Taxonomy" id="360910"/>
    <lineage>
        <taxon>Bacteria</taxon>
        <taxon>Pseudomonadati</taxon>
        <taxon>Pseudomonadota</taxon>
        <taxon>Betaproteobacteria</taxon>
        <taxon>Burkholderiales</taxon>
        <taxon>Alcaligenaceae</taxon>
        <taxon>Bordetella</taxon>
    </lineage>
</organism>
<protein>
    <recommendedName>
        <fullName evidence="1">Ribose-5-phosphate isomerase A</fullName>
        <ecNumber evidence="1">5.3.1.6</ecNumber>
    </recommendedName>
    <alternativeName>
        <fullName evidence="1">Phosphoriboisomerase A</fullName>
        <shortName evidence="1">PRI</shortName>
    </alternativeName>
</protein>
<reference key="1">
    <citation type="journal article" date="2006" name="J. Bacteriol.">
        <title>Comparison of the genome sequence of the poultry pathogen Bordetella avium with those of B. bronchiseptica, B. pertussis, and B. parapertussis reveals extensive diversity in surface structures associated with host interaction.</title>
        <authorList>
            <person name="Sebaihia M."/>
            <person name="Preston A."/>
            <person name="Maskell D.J."/>
            <person name="Kuzmiak H."/>
            <person name="Connell T.D."/>
            <person name="King N.D."/>
            <person name="Orndorff P.E."/>
            <person name="Miyamoto D.M."/>
            <person name="Thomson N.R."/>
            <person name="Harris D."/>
            <person name="Goble A."/>
            <person name="Lord A."/>
            <person name="Murphy L."/>
            <person name="Quail M.A."/>
            <person name="Rutter S."/>
            <person name="Squares R."/>
            <person name="Squares S."/>
            <person name="Woodward J."/>
            <person name="Parkhill J."/>
            <person name="Temple L.M."/>
        </authorList>
    </citation>
    <scope>NUCLEOTIDE SEQUENCE [LARGE SCALE GENOMIC DNA]</scope>
    <source>
        <strain>197N</strain>
    </source>
</reference>
<name>RPIA_BORA1</name>
<accession>Q2KYQ1</accession>
<proteinExistence type="inferred from homology"/>